<dbReference type="EMBL" id="CP000414">
    <property type="protein sequence ID" value="ABJ62454.1"/>
    <property type="molecule type" value="Genomic_DNA"/>
</dbReference>
<dbReference type="SMR" id="Q03WG8"/>
<dbReference type="EnsemblBacteria" id="ABJ62454">
    <property type="protein sequence ID" value="ABJ62454"/>
    <property type="gene ID" value="LEUM_1361"/>
</dbReference>
<dbReference type="KEGG" id="lme:LEUM_1361"/>
<dbReference type="eggNOG" id="COG0267">
    <property type="taxonomic scope" value="Bacteria"/>
</dbReference>
<dbReference type="HOGENOM" id="CLU_190949_3_2_9"/>
<dbReference type="Proteomes" id="UP000000362">
    <property type="component" value="Chromosome"/>
</dbReference>
<dbReference type="GO" id="GO:0005737">
    <property type="term" value="C:cytoplasm"/>
    <property type="evidence" value="ECO:0007669"/>
    <property type="project" value="UniProtKB-ARBA"/>
</dbReference>
<dbReference type="GO" id="GO:1990904">
    <property type="term" value="C:ribonucleoprotein complex"/>
    <property type="evidence" value="ECO:0007669"/>
    <property type="project" value="UniProtKB-KW"/>
</dbReference>
<dbReference type="GO" id="GO:0005840">
    <property type="term" value="C:ribosome"/>
    <property type="evidence" value="ECO:0007669"/>
    <property type="project" value="UniProtKB-KW"/>
</dbReference>
<dbReference type="GO" id="GO:0003735">
    <property type="term" value="F:structural constituent of ribosome"/>
    <property type="evidence" value="ECO:0007669"/>
    <property type="project" value="InterPro"/>
</dbReference>
<dbReference type="GO" id="GO:0006412">
    <property type="term" value="P:translation"/>
    <property type="evidence" value="ECO:0007669"/>
    <property type="project" value="UniProtKB-UniRule"/>
</dbReference>
<dbReference type="Gene3D" id="2.20.28.120">
    <property type="entry name" value="Ribosomal protein L33"/>
    <property type="match status" value="1"/>
</dbReference>
<dbReference type="HAMAP" id="MF_00294">
    <property type="entry name" value="Ribosomal_bL33"/>
    <property type="match status" value="1"/>
</dbReference>
<dbReference type="InterPro" id="IPR001705">
    <property type="entry name" value="Ribosomal_bL33"/>
</dbReference>
<dbReference type="InterPro" id="IPR018264">
    <property type="entry name" value="Ribosomal_bL33_CS"/>
</dbReference>
<dbReference type="InterPro" id="IPR038584">
    <property type="entry name" value="Ribosomal_bL33_sf"/>
</dbReference>
<dbReference type="InterPro" id="IPR011332">
    <property type="entry name" value="Ribosomal_zn-bd"/>
</dbReference>
<dbReference type="NCBIfam" id="NF001764">
    <property type="entry name" value="PRK00504.1"/>
    <property type="match status" value="1"/>
</dbReference>
<dbReference type="NCBIfam" id="NF001860">
    <property type="entry name" value="PRK00595.1"/>
    <property type="match status" value="1"/>
</dbReference>
<dbReference type="NCBIfam" id="TIGR01023">
    <property type="entry name" value="rpmG_bact"/>
    <property type="match status" value="1"/>
</dbReference>
<dbReference type="PANTHER" id="PTHR43168">
    <property type="entry name" value="50S RIBOSOMAL PROTEIN L33, CHLOROPLASTIC"/>
    <property type="match status" value="1"/>
</dbReference>
<dbReference type="PANTHER" id="PTHR43168:SF2">
    <property type="entry name" value="LARGE RIBOSOMAL SUBUNIT PROTEIN BL33C"/>
    <property type="match status" value="1"/>
</dbReference>
<dbReference type="Pfam" id="PF00471">
    <property type="entry name" value="Ribosomal_L33"/>
    <property type="match status" value="1"/>
</dbReference>
<dbReference type="SUPFAM" id="SSF57829">
    <property type="entry name" value="Zn-binding ribosomal proteins"/>
    <property type="match status" value="1"/>
</dbReference>
<dbReference type="PROSITE" id="PS00582">
    <property type="entry name" value="RIBOSOMAL_L33"/>
    <property type="match status" value="1"/>
</dbReference>
<accession>Q03WG8</accession>
<gene>
    <name evidence="1" type="primary">rpmG2</name>
    <name type="ordered locus">LEUM_1361</name>
</gene>
<organism>
    <name type="scientific">Leuconostoc mesenteroides subsp. mesenteroides (strain ATCC 8293 / DSM 20343 / BCRC 11652 / CCM 1803 / JCM 6124 / NCDO 523 / NBRC 100496 / NCIMB 8023 / NCTC 12954 / NRRL B-1118 / 37Y)</name>
    <dbReference type="NCBI Taxonomy" id="203120"/>
    <lineage>
        <taxon>Bacteria</taxon>
        <taxon>Bacillati</taxon>
        <taxon>Bacillota</taxon>
        <taxon>Bacilli</taxon>
        <taxon>Lactobacillales</taxon>
        <taxon>Lactobacillaceae</taxon>
        <taxon>Leuconostoc</taxon>
    </lineage>
</organism>
<reference key="1">
    <citation type="journal article" date="2006" name="Proc. Natl. Acad. Sci. U.S.A.">
        <title>Comparative genomics of the lactic acid bacteria.</title>
        <authorList>
            <person name="Makarova K.S."/>
            <person name="Slesarev A."/>
            <person name="Wolf Y.I."/>
            <person name="Sorokin A."/>
            <person name="Mirkin B."/>
            <person name="Koonin E.V."/>
            <person name="Pavlov A."/>
            <person name="Pavlova N."/>
            <person name="Karamychev V."/>
            <person name="Polouchine N."/>
            <person name="Shakhova V."/>
            <person name="Grigoriev I."/>
            <person name="Lou Y."/>
            <person name="Rohksar D."/>
            <person name="Lucas S."/>
            <person name="Huang K."/>
            <person name="Goodstein D.M."/>
            <person name="Hawkins T."/>
            <person name="Plengvidhya V."/>
            <person name="Welker D."/>
            <person name="Hughes J."/>
            <person name="Goh Y."/>
            <person name="Benson A."/>
            <person name="Baldwin K."/>
            <person name="Lee J.-H."/>
            <person name="Diaz-Muniz I."/>
            <person name="Dosti B."/>
            <person name="Smeianov V."/>
            <person name="Wechter W."/>
            <person name="Barabote R."/>
            <person name="Lorca G."/>
            <person name="Altermann E."/>
            <person name="Barrangou R."/>
            <person name="Ganesan B."/>
            <person name="Xie Y."/>
            <person name="Rawsthorne H."/>
            <person name="Tamir D."/>
            <person name="Parker C."/>
            <person name="Breidt F."/>
            <person name="Broadbent J.R."/>
            <person name="Hutkins R."/>
            <person name="O'Sullivan D."/>
            <person name="Steele J."/>
            <person name="Unlu G."/>
            <person name="Saier M.H. Jr."/>
            <person name="Klaenhammer T."/>
            <person name="Richardson P."/>
            <person name="Kozyavkin S."/>
            <person name="Weimer B.C."/>
            <person name="Mills D.A."/>
        </authorList>
    </citation>
    <scope>NUCLEOTIDE SEQUENCE [LARGE SCALE GENOMIC DNA]</scope>
    <source>
        <strain>ATCC 8293 / DSM 20343 / BCRC 11652 / CCM 1803 / JCM 6124 / NCDO 523 / NBRC 100496 / NCIMB 8023 / NCTC 12954 / NRRL B-1118 / 37Y</strain>
    </source>
</reference>
<comment type="similarity">
    <text evidence="1">Belongs to the bacterial ribosomal protein bL33 family.</text>
</comment>
<sequence length="49" mass="5872">MRIHVVLGNDETGERIYLTSKNRRNTPDRLELKKYSPKLRKVVTFKEIK</sequence>
<proteinExistence type="inferred from homology"/>
<keyword id="KW-1185">Reference proteome</keyword>
<keyword id="KW-0687">Ribonucleoprotein</keyword>
<keyword id="KW-0689">Ribosomal protein</keyword>
<name>RL332_LEUMM</name>
<feature type="chain" id="PRO_0000356528" description="Large ribosomal subunit protein bL33B">
    <location>
        <begin position="1"/>
        <end position="49"/>
    </location>
</feature>
<protein>
    <recommendedName>
        <fullName evidence="1">Large ribosomal subunit protein bL33B</fullName>
    </recommendedName>
    <alternativeName>
        <fullName evidence="1">50S ribosomal protein L33 2</fullName>
    </alternativeName>
</protein>
<evidence type="ECO:0000255" key="1">
    <source>
        <dbReference type="HAMAP-Rule" id="MF_00294"/>
    </source>
</evidence>